<sequence>MIQAETQLNAADNSGAKRLYCIKVLGGTRKRYASVGDIIVVSVKEAIPNAKVKKGDVLKAVVVRTQKEVRRPDGSYIKFDDNSAVLINQAKEPIGTRIFGPVARELRAKQFMKIISLAPEVL</sequence>
<feature type="chain" id="PRO_1000055733" description="Large ribosomal subunit protein uL14">
    <location>
        <begin position="1"/>
        <end position="122"/>
    </location>
</feature>
<name>RL14_SYNFM</name>
<organism>
    <name type="scientific">Syntrophobacter fumaroxidans (strain DSM 10017 / MPOB)</name>
    <dbReference type="NCBI Taxonomy" id="335543"/>
    <lineage>
        <taxon>Bacteria</taxon>
        <taxon>Pseudomonadati</taxon>
        <taxon>Thermodesulfobacteriota</taxon>
        <taxon>Syntrophobacteria</taxon>
        <taxon>Syntrophobacterales</taxon>
        <taxon>Syntrophobacteraceae</taxon>
        <taxon>Syntrophobacter</taxon>
    </lineage>
</organism>
<keyword id="KW-1185">Reference proteome</keyword>
<keyword id="KW-0687">Ribonucleoprotein</keyword>
<keyword id="KW-0689">Ribosomal protein</keyword>
<keyword id="KW-0694">RNA-binding</keyword>
<keyword id="KW-0699">rRNA-binding</keyword>
<dbReference type="EMBL" id="CP000478">
    <property type="protein sequence ID" value="ABK17252.1"/>
    <property type="molecule type" value="Genomic_DNA"/>
</dbReference>
<dbReference type="RefSeq" id="WP_011698422.1">
    <property type="nucleotide sequence ID" value="NC_008554.1"/>
</dbReference>
<dbReference type="SMR" id="A0LIK0"/>
<dbReference type="FunCoup" id="A0LIK0">
    <property type="interactions" value="619"/>
</dbReference>
<dbReference type="STRING" id="335543.Sfum_1565"/>
<dbReference type="KEGG" id="sfu:Sfum_1565"/>
<dbReference type="eggNOG" id="COG0093">
    <property type="taxonomic scope" value="Bacteria"/>
</dbReference>
<dbReference type="HOGENOM" id="CLU_095071_2_1_7"/>
<dbReference type="InParanoid" id="A0LIK0"/>
<dbReference type="OrthoDB" id="9806379at2"/>
<dbReference type="Proteomes" id="UP000001784">
    <property type="component" value="Chromosome"/>
</dbReference>
<dbReference type="GO" id="GO:0022625">
    <property type="term" value="C:cytosolic large ribosomal subunit"/>
    <property type="evidence" value="ECO:0007669"/>
    <property type="project" value="TreeGrafter"/>
</dbReference>
<dbReference type="GO" id="GO:0070180">
    <property type="term" value="F:large ribosomal subunit rRNA binding"/>
    <property type="evidence" value="ECO:0007669"/>
    <property type="project" value="TreeGrafter"/>
</dbReference>
<dbReference type="GO" id="GO:0003735">
    <property type="term" value="F:structural constituent of ribosome"/>
    <property type="evidence" value="ECO:0007669"/>
    <property type="project" value="InterPro"/>
</dbReference>
<dbReference type="GO" id="GO:0006412">
    <property type="term" value="P:translation"/>
    <property type="evidence" value="ECO:0007669"/>
    <property type="project" value="UniProtKB-UniRule"/>
</dbReference>
<dbReference type="CDD" id="cd00337">
    <property type="entry name" value="Ribosomal_uL14"/>
    <property type="match status" value="1"/>
</dbReference>
<dbReference type="FunFam" id="2.40.150.20:FF:000001">
    <property type="entry name" value="50S ribosomal protein L14"/>
    <property type="match status" value="1"/>
</dbReference>
<dbReference type="Gene3D" id="2.40.150.20">
    <property type="entry name" value="Ribosomal protein L14"/>
    <property type="match status" value="1"/>
</dbReference>
<dbReference type="HAMAP" id="MF_01367">
    <property type="entry name" value="Ribosomal_uL14"/>
    <property type="match status" value="1"/>
</dbReference>
<dbReference type="InterPro" id="IPR000218">
    <property type="entry name" value="Ribosomal_uL14"/>
</dbReference>
<dbReference type="InterPro" id="IPR005745">
    <property type="entry name" value="Ribosomal_uL14_bac-type"/>
</dbReference>
<dbReference type="InterPro" id="IPR019972">
    <property type="entry name" value="Ribosomal_uL14_CS"/>
</dbReference>
<dbReference type="InterPro" id="IPR036853">
    <property type="entry name" value="Ribosomal_uL14_sf"/>
</dbReference>
<dbReference type="NCBIfam" id="TIGR01067">
    <property type="entry name" value="rplN_bact"/>
    <property type="match status" value="1"/>
</dbReference>
<dbReference type="PANTHER" id="PTHR11761">
    <property type="entry name" value="50S/60S RIBOSOMAL PROTEIN L14/L23"/>
    <property type="match status" value="1"/>
</dbReference>
<dbReference type="PANTHER" id="PTHR11761:SF3">
    <property type="entry name" value="LARGE RIBOSOMAL SUBUNIT PROTEIN UL14M"/>
    <property type="match status" value="1"/>
</dbReference>
<dbReference type="Pfam" id="PF00238">
    <property type="entry name" value="Ribosomal_L14"/>
    <property type="match status" value="1"/>
</dbReference>
<dbReference type="SMART" id="SM01374">
    <property type="entry name" value="Ribosomal_L14"/>
    <property type="match status" value="1"/>
</dbReference>
<dbReference type="SUPFAM" id="SSF50193">
    <property type="entry name" value="Ribosomal protein L14"/>
    <property type="match status" value="1"/>
</dbReference>
<dbReference type="PROSITE" id="PS00049">
    <property type="entry name" value="RIBOSOMAL_L14"/>
    <property type="match status" value="1"/>
</dbReference>
<protein>
    <recommendedName>
        <fullName evidence="1">Large ribosomal subunit protein uL14</fullName>
    </recommendedName>
    <alternativeName>
        <fullName evidence="2">50S ribosomal protein L14</fullName>
    </alternativeName>
</protein>
<evidence type="ECO:0000255" key="1">
    <source>
        <dbReference type="HAMAP-Rule" id="MF_01367"/>
    </source>
</evidence>
<evidence type="ECO:0000305" key="2"/>
<gene>
    <name evidence="1" type="primary">rplN</name>
    <name type="ordered locus">Sfum_1565</name>
</gene>
<reference key="1">
    <citation type="submission" date="2006-10" db="EMBL/GenBank/DDBJ databases">
        <title>Complete sequence of Syntrophobacter fumaroxidans MPOB.</title>
        <authorList>
            <consortium name="US DOE Joint Genome Institute"/>
            <person name="Copeland A."/>
            <person name="Lucas S."/>
            <person name="Lapidus A."/>
            <person name="Barry K."/>
            <person name="Detter J.C."/>
            <person name="Glavina del Rio T."/>
            <person name="Hammon N."/>
            <person name="Israni S."/>
            <person name="Pitluck S."/>
            <person name="Goltsman E.G."/>
            <person name="Martinez M."/>
            <person name="Schmutz J."/>
            <person name="Larimer F."/>
            <person name="Land M."/>
            <person name="Hauser L."/>
            <person name="Kyrpides N."/>
            <person name="Kim E."/>
            <person name="Boone D.R."/>
            <person name="Brockman F."/>
            <person name="Culley D."/>
            <person name="Ferry J."/>
            <person name="Gunsalus R."/>
            <person name="McInerney M.J."/>
            <person name="Morrison M."/>
            <person name="Plugge C."/>
            <person name="Rohlin L."/>
            <person name="Scholten J."/>
            <person name="Sieber J."/>
            <person name="Stams A.J.M."/>
            <person name="Worm P."/>
            <person name="Henstra A.M."/>
            <person name="Richardson P."/>
        </authorList>
    </citation>
    <scope>NUCLEOTIDE SEQUENCE [LARGE SCALE GENOMIC DNA]</scope>
    <source>
        <strain>DSM 10017 / MPOB</strain>
    </source>
</reference>
<accession>A0LIK0</accession>
<proteinExistence type="inferred from homology"/>
<comment type="function">
    <text evidence="1">Binds to 23S rRNA. Forms part of two intersubunit bridges in the 70S ribosome.</text>
</comment>
<comment type="subunit">
    <text evidence="1">Part of the 50S ribosomal subunit. Forms a cluster with proteins L3 and L19. In the 70S ribosome, L14 and L19 interact and together make contacts with the 16S rRNA in bridges B5 and B8.</text>
</comment>
<comment type="similarity">
    <text evidence="1">Belongs to the universal ribosomal protein uL14 family.</text>
</comment>